<proteinExistence type="inferred from homology"/>
<comment type="function">
    <text evidence="1">Catalyzes the reversible cleavage of pseudouridine 5'-phosphate (PsiMP) to ribose 5-phosphate and uracil. Functions biologically in the cleavage direction, as part of a pseudouridine degradation pathway.</text>
</comment>
<comment type="catalytic activity">
    <reaction evidence="1">
        <text>D-ribose 5-phosphate + uracil = psi-UMP + H2O</text>
        <dbReference type="Rhea" id="RHEA:18337"/>
        <dbReference type="ChEBI" id="CHEBI:15377"/>
        <dbReference type="ChEBI" id="CHEBI:17568"/>
        <dbReference type="ChEBI" id="CHEBI:58380"/>
        <dbReference type="ChEBI" id="CHEBI:78346"/>
        <dbReference type="EC" id="4.2.1.70"/>
    </reaction>
</comment>
<comment type="cofactor">
    <cofactor evidence="1">
        <name>Mn(2+)</name>
        <dbReference type="ChEBI" id="CHEBI:29035"/>
    </cofactor>
    <text evidence="1">Binds 1 Mn(2+) ion per subunit.</text>
</comment>
<comment type="subunit">
    <text evidence="1">Homotrimer.</text>
</comment>
<comment type="similarity">
    <text evidence="1">Belongs to the pseudouridine-5'-phosphate glycosidase family.</text>
</comment>
<feature type="chain" id="PRO_0000390549" description="Pseudouridine-5'-phosphate glycosidase">
    <location>
        <begin position="1"/>
        <end position="317"/>
    </location>
</feature>
<feature type="active site" description="Proton donor" evidence="1">
    <location>
        <position position="27"/>
    </location>
</feature>
<feature type="active site" description="Nucleophile" evidence="1">
    <location>
        <position position="162"/>
    </location>
</feature>
<feature type="binding site" evidence="1">
    <location>
        <position position="89"/>
    </location>
    <ligand>
        <name>substrate</name>
    </ligand>
</feature>
<feature type="binding site" evidence="1">
    <location>
        <position position="109"/>
    </location>
    <ligand>
        <name>substrate</name>
    </ligand>
</feature>
<feature type="binding site" evidence="1">
    <location>
        <position position="141"/>
    </location>
    <ligand>
        <name>Mn(2+)</name>
        <dbReference type="ChEBI" id="CHEBI:29035"/>
    </ligand>
</feature>
<feature type="binding site" evidence="1">
    <location>
        <begin position="143"/>
        <end position="145"/>
    </location>
    <ligand>
        <name>substrate</name>
    </ligand>
</feature>
<accession>A9GT78</accession>
<organism>
    <name type="scientific">Sorangium cellulosum (strain So ce56)</name>
    <name type="common">Polyangium cellulosum (strain So ce56)</name>
    <dbReference type="NCBI Taxonomy" id="448385"/>
    <lineage>
        <taxon>Bacteria</taxon>
        <taxon>Pseudomonadati</taxon>
        <taxon>Myxococcota</taxon>
        <taxon>Polyangia</taxon>
        <taxon>Polyangiales</taxon>
        <taxon>Polyangiaceae</taxon>
        <taxon>Sorangium</taxon>
    </lineage>
</organism>
<protein>
    <recommendedName>
        <fullName evidence="1">Pseudouridine-5'-phosphate glycosidase</fullName>
        <shortName evidence="1">PsiMP glycosidase</shortName>
        <ecNumber evidence="1">4.2.1.70</ecNumber>
    </recommendedName>
</protein>
<reference key="1">
    <citation type="journal article" date="2007" name="Nat. Biotechnol.">
        <title>Complete genome sequence of the myxobacterium Sorangium cellulosum.</title>
        <authorList>
            <person name="Schneiker S."/>
            <person name="Perlova O."/>
            <person name="Kaiser O."/>
            <person name="Gerth K."/>
            <person name="Alici A."/>
            <person name="Altmeyer M.O."/>
            <person name="Bartels D."/>
            <person name="Bekel T."/>
            <person name="Beyer S."/>
            <person name="Bode E."/>
            <person name="Bode H.B."/>
            <person name="Bolten C.J."/>
            <person name="Choudhuri J.V."/>
            <person name="Doss S."/>
            <person name="Elnakady Y.A."/>
            <person name="Frank B."/>
            <person name="Gaigalat L."/>
            <person name="Goesmann A."/>
            <person name="Groeger C."/>
            <person name="Gross F."/>
            <person name="Jelsbak L."/>
            <person name="Jelsbak L."/>
            <person name="Kalinowski J."/>
            <person name="Kegler C."/>
            <person name="Knauber T."/>
            <person name="Konietzny S."/>
            <person name="Kopp M."/>
            <person name="Krause L."/>
            <person name="Krug D."/>
            <person name="Linke B."/>
            <person name="Mahmud T."/>
            <person name="Martinez-Arias R."/>
            <person name="McHardy A.C."/>
            <person name="Merai M."/>
            <person name="Meyer F."/>
            <person name="Mormann S."/>
            <person name="Munoz-Dorado J."/>
            <person name="Perez J."/>
            <person name="Pradella S."/>
            <person name="Rachid S."/>
            <person name="Raddatz G."/>
            <person name="Rosenau F."/>
            <person name="Rueckert C."/>
            <person name="Sasse F."/>
            <person name="Scharfe M."/>
            <person name="Schuster S.C."/>
            <person name="Suen G."/>
            <person name="Treuner-Lange A."/>
            <person name="Velicer G.J."/>
            <person name="Vorholter F.-J."/>
            <person name="Weissman K.J."/>
            <person name="Welch R.D."/>
            <person name="Wenzel S.C."/>
            <person name="Whitworth D.E."/>
            <person name="Wilhelm S."/>
            <person name="Wittmann C."/>
            <person name="Bloecker H."/>
            <person name="Puehler A."/>
            <person name="Mueller R."/>
        </authorList>
    </citation>
    <scope>NUCLEOTIDE SEQUENCE [LARGE SCALE GENOMIC DNA]</scope>
    <source>
        <strain>So ce56</strain>
    </source>
</reference>
<gene>
    <name evidence="1" type="primary">psuG</name>
    <name type="ordered locus">sce6742</name>
</gene>
<name>PSUG_SORC5</name>
<dbReference type="EC" id="4.2.1.70" evidence="1"/>
<dbReference type="EMBL" id="AM746676">
    <property type="protein sequence ID" value="CAN96911.1"/>
    <property type="molecule type" value="Genomic_DNA"/>
</dbReference>
<dbReference type="RefSeq" id="WP_012239350.1">
    <property type="nucleotide sequence ID" value="NC_010162.1"/>
</dbReference>
<dbReference type="SMR" id="A9GT78"/>
<dbReference type="STRING" id="448385.sce6742"/>
<dbReference type="KEGG" id="scl:sce6742"/>
<dbReference type="eggNOG" id="COG2313">
    <property type="taxonomic scope" value="Bacteria"/>
</dbReference>
<dbReference type="HOGENOM" id="CLU_012201_0_1_7"/>
<dbReference type="OrthoDB" id="9805870at2"/>
<dbReference type="BioCyc" id="SCEL448385:SCE_RS34590-MONOMER"/>
<dbReference type="Proteomes" id="UP000002139">
    <property type="component" value="Chromosome"/>
</dbReference>
<dbReference type="GO" id="GO:0005737">
    <property type="term" value="C:cytoplasm"/>
    <property type="evidence" value="ECO:0007669"/>
    <property type="project" value="TreeGrafter"/>
</dbReference>
<dbReference type="GO" id="GO:0016798">
    <property type="term" value="F:hydrolase activity, acting on glycosyl bonds"/>
    <property type="evidence" value="ECO:0007669"/>
    <property type="project" value="UniProtKB-KW"/>
</dbReference>
<dbReference type="GO" id="GO:0046872">
    <property type="term" value="F:metal ion binding"/>
    <property type="evidence" value="ECO:0007669"/>
    <property type="project" value="UniProtKB-KW"/>
</dbReference>
<dbReference type="GO" id="GO:0004730">
    <property type="term" value="F:pseudouridylate synthase activity"/>
    <property type="evidence" value="ECO:0007669"/>
    <property type="project" value="UniProtKB-UniRule"/>
</dbReference>
<dbReference type="GO" id="GO:0046113">
    <property type="term" value="P:nucleobase catabolic process"/>
    <property type="evidence" value="ECO:0007669"/>
    <property type="project" value="UniProtKB-UniRule"/>
</dbReference>
<dbReference type="Gene3D" id="3.40.1790.10">
    <property type="entry name" value="Indigoidine synthase domain"/>
    <property type="match status" value="1"/>
</dbReference>
<dbReference type="HAMAP" id="MF_01876">
    <property type="entry name" value="PsiMP_glycosidase"/>
    <property type="match status" value="1"/>
</dbReference>
<dbReference type="InterPro" id="IPR022830">
    <property type="entry name" value="Indigdn_synthA-like"/>
</dbReference>
<dbReference type="InterPro" id="IPR007342">
    <property type="entry name" value="PsuG"/>
</dbReference>
<dbReference type="PANTHER" id="PTHR42909:SF1">
    <property type="entry name" value="CARBOHYDRATE KINASE PFKB DOMAIN-CONTAINING PROTEIN"/>
    <property type="match status" value="1"/>
</dbReference>
<dbReference type="PANTHER" id="PTHR42909">
    <property type="entry name" value="ZGC:136858"/>
    <property type="match status" value="1"/>
</dbReference>
<dbReference type="Pfam" id="PF04227">
    <property type="entry name" value="Indigoidine_A"/>
    <property type="match status" value="1"/>
</dbReference>
<dbReference type="SUPFAM" id="SSF110581">
    <property type="entry name" value="Indigoidine synthase A-like"/>
    <property type="match status" value="1"/>
</dbReference>
<keyword id="KW-0326">Glycosidase</keyword>
<keyword id="KW-0378">Hydrolase</keyword>
<keyword id="KW-0456">Lyase</keyword>
<keyword id="KW-0464">Manganese</keyword>
<keyword id="KW-0479">Metal-binding</keyword>
<keyword id="KW-1185">Reference proteome</keyword>
<evidence type="ECO:0000255" key="1">
    <source>
        <dbReference type="HAMAP-Rule" id="MF_01876"/>
    </source>
</evidence>
<sequence length="317" mass="33415">MSIKDHLSISSEVRKALAGGRPVVALESTIITHGMPYPQNLEMVRRVEAVVRRNGAVPATIAIMDGKLRVGVKGEDLERLARGGGKAAKASRRDVAALLVLGGMAGTTVATTMMAAAWAGIQVFATGGIGGVHRGAETTFDISADLEELSQTQVAVVCAGAKSILDIPKTLETLETHGVPVLGYKTEDFPAFWARQSGQKVDHRIESAEEAARVIALQFELGMGGVLVANPIPESHAMDARAIEARIEEAIRCAEAEGVSRKDLTPFLLKRIFELTEGKSLIANIALVENNAAVAAEIATAMSELGAKSKSKSKAKA</sequence>